<name>NTPPA_THEMA</name>
<proteinExistence type="inferred from homology"/>
<evidence type="ECO:0000255" key="1">
    <source>
        <dbReference type="HAMAP-Rule" id="MF_00528"/>
    </source>
</evidence>
<keyword id="KW-0963">Cytoplasm</keyword>
<keyword id="KW-0378">Hydrolase</keyword>
<keyword id="KW-0546">Nucleotide metabolism</keyword>
<keyword id="KW-1185">Reference proteome</keyword>
<feature type="chain" id="PRO_0000123066" description="dTTP/UTP pyrophosphatase">
    <location>
        <begin position="1"/>
        <end position="204"/>
    </location>
</feature>
<feature type="active site" description="Proton acceptor" evidence="1">
    <location>
        <position position="68"/>
    </location>
</feature>
<feature type="site" description="Important for substrate specificity" evidence="1">
    <location>
        <position position="11"/>
    </location>
</feature>
<feature type="site" description="Important for substrate specificity" evidence="1">
    <location>
        <position position="69"/>
    </location>
</feature>
<feature type="site" description="Important for substrate specificity" evidence="1">
    <location>
        <position position="151"/>
    </location>
</feature>
<organism>
    <name type="scientific">Thermotoga maritima (strain ATCC 43589 / DSM 3109 / JCM 10099 / NBRC 100826 / MSB8)</name>
    <dbReference type="NCBI Taxonomy" id="243274"/>
    <lineage>
        <taxon>Bacteria</taxon>
        <taxon>Thermotogati</taxon>
        <taxon>Thermotogota</taxon>
        <taxon>Thermotogae</taxon>
        <taxon>Thermotogales</taxon>
        <taxon>Thermotogaceae</taxon>
        <taxon>Thermotoga</taxon>
    </lineage>
</organism>
<dbReference type="EC" id="3.6.1.9" evidence="1"/>
<dbReference type="EMBL" id="AE000512">
    <property type="protein sequence ID" value="AAD36622.1"/>
    <property type="molecule type" value="Genomic_DNA"/>
</dbReference>
<dbReference type="PIR" id="G72239">
    <property type="entry name" value="G72239"/>
</dbReference>
<dbReference type="RefSeq" id="NP_229356.1">
    <property type="nucleotide sequence ID" value="NC_000853.1"/>
</dbReference>
<dbReference type="RefSeq" id="WP_010865361.1">
    <property type="nucleotide sequence ID" value="NZ_CP011107.1"/>
</dbReference>
<dbReference type="SMR" id="Q9X1P2"/>
<dbReference type="FunCoup" id="Q9X1P2">
    <property type="interactions" value="310"/>
</dbReference>
<dbReference type="STRING" id="243274.TM_1556"/>
<dbReference type="PaxDb" id="243274-THEMA_06500"/>
<dbReference type="EnsemblBacteria" id="AAD36622">
    <property type="protein sequence ID" value="AAD36622"/>
    <property type="gene ID" value="TM_1556"/>
</dbReference>
<dbReference type="KEGG" id="tma:TM1556"/>
<dbReference type="KEGG" id="tmm:Tmari_1564"/>
<dbReference type="KEGG" id="tmw:THMA_1591"/>
<dbReference type="eggNOG" id="COG0424">
    <property type="taxonomic scope" value="Bacteria"/>
</dbReference>
<dbReference type="InParanoid" id="Q9X1P2"/>
<dbReference type="OrthoDB" id="9807767at2"/>
<dbReference type="Proteomes" id="UP000008183">
    <property type="component" value="Chromosome"/>
</dbReference>
<dbReference type="GO" id="GO:0005737">
    <property type="term" value="C:cytoplasm"/>
    <property type="evidence" value="ECO:0007669"/>
    <property type="project" value="UniProtKB-SubCell"/>
</dbReference>
<dbReference type="GO" id="GO:0036218">
    <property type="term" value="F:dTTP diphosphatase activity"/>
    <property type="evidence" value="ECO:0007669"/>
    <property type="project" value="RHEA"/>
</dbReference>
<dbReference type="GO" id="GO:0047429">
    <property type="term" value="F:nucleoside triphosphate diphosphatase activity"/>
    <property type="evidence" value="ECO:0000318"/>
    <property type="project" value="GO_Central"/>
</dbReference>
<dbReference type="GO" id="GO:0036221">
    <property type="term" value="F:UTP diphosphatase activity"/>
    <property type="evidence" value="ECO:0007669"/>
    <property type="project" value="RHEA"/>
</dbReference>
<dbReference type="GO" id="GO:0009117">
    <property type="term" value="P:nucleotide metabolic process"/>
    <property type="evidence" value="ECO:0007669"/>
    <property type="project" value="UniProtKB-KW"/>
</dbReference>
<dbReference type="CDD" id="cd00555">
    <property type="entry name" value="Maf"/>
    <property type="match status" value="1"/>
</dbReference>
<dbReference type="FunFam" id="3.90.950.10:FF:000005">
    <property type="entry name" value="7-methyl-GTP pyrophosphatase"/>
    <property type="match status" value="1"/>
</dbReference>
<dbReference type="Gene3D" id="3.90.950.10">
    <property type="match status" value="1"/>
</dbReference>
<dbReference type="HAMAP" id="MF_00528">
    <property type="entry name" value="Maf"/>
    <property type="match status" value="1"/>
</dbReference>
<dbReference type="InterPro" id="IPR029001">
    <property type="entry name" value="ITPase-like_fam"/>
</dbReference>
<dbReference type="InterPro" id="IPR003697">
    <property type="entry name" value="Maf-like"/>
</dbReference>
<dbReference type="NCBIfam" id="TIGR00172">
    <property type="entry name" value="maf"/>
    <property type="match status" value="1"/>
</dbReference>
<dbReference type="NCBIfam" id="NF010943">
    <property type="entry name" value="PRK14363.1"/>
    <property type="match status" value="1"/>
</dbReference>
<dbReference type="PANTHER" id="PTHR43213">
    <property type="entry name" value="BIFUNCTIONAL DTTP/UTP PYROPHOSPHATASE/METHYLTRANSFERASE PROTEIN-RELATED"/>
    <property type="match status" value="1"/>
</dbReference>
<dbReference type="PANTHER" id="PTHR43213:SF5">
    <property type="entry name" value="BIFUNCTIONAL DTTP_UTP PYROPHOSPHATASE_METHYLTRANSFERASE PROTEIN-RELATED"/>
    <property type="match status" value="1"/>
</dbReference>
<dbReference type="Pfam" id="PF02545">
    <property type="entry name" value="Maf"/>
    <property type="match status" value="1"/>
</dbReference>
<dbReference type="PIRSF" id="PIRSF006305">
    <property type="entry name" value="Maf"/>
    <property type="match status" value="1"/>
</dbReference>
<dbReference type="SUPFAM" id="SSF52972">
    <property type="entry name" value="ITPase-like"/>
    <property type="match status" value="1"/>
</dbReference>
<protein>
    <recommendedName>
        <fullName evidence="1">dTTP/UTP pyrophosphatase</fullName>
        <shortName evidence="1">dTTPase/UTPase</shortName>
        <ecNumber evidence="1">3.6.1.9</ecNumber>
    </recommendedName>
    <alternativeName>
        <fullName evidence="1">Nucleoside triphosphate pyrophosphatase</fullName>
    </alternativeName>
    <alternativeName>
        <fullName evidence="1">Nucleotide pyrophosphatase</fullName>
        <shortName evidence="1">Nucleotide PPase</shortName>
    </alternativeName>
</protein>
<gene>
    <name type="ordered locus">TM_1556</name>
</gene>
<accession>Q9X1P2</accession>
<reference key="1">
    <citation type="journal article" date="1999" name="Nature">
        <title>Evidence for lateral gene transfer between Archaea and Bacteria from genome sequence of Thermotoga maritima.</title>
        <authorList>
            <person name="Nelson K.E."/>
            <person name="Clayton R.A."/>
            <person name="Gill S.R."/>
            <person name="Gwinn M.L."/>
            <person name="Dodson R.J."/>
            <person name="Haft D.H."/>
            <person name="Hickey E.K."/>
            <person name="Peterson J.D."/>
            <person name="Nelson W.C."/>
            <person name="Ketchum K.A."/>
            <person name="McDonald L.A."/>
            <person name="Utterback T.R."/>
            <person name="Malek J.A."/>
            <person name="Linher K.D."/>
            <person name="Garrett M.M."/>
            <person name="Stewart A.M."/>
            <person name="Cotton M.D."/>
            <person name="Pratt M.S."/>
            <person name="Phillips C.A."/>
            <person name="Richardson D.L."/>
            <person name="Heidelberg J.F."/>
            <person name="Sutton G.G."/>
            <person name="Fleischmann R.D."/>
            <person name="Eisen J.A."/>
            <person name="White O."/>
            <person name="Salzberg S.L."/>
            <person name="Smith H.O."/>
            <person name="Venter J.C."/>
            <person name="Fraser C.M."/>
        </authorList>
    </citation>
    <scope>NUCLEOTIDE SEQUENCE [LARGE SCALE GENOMIC DNA]</scope>
    <source>
        <strain>ATCC 43589 / DSM 3109 / JCM 10099 / NBRC 100826 / MSB8</strain>
    </source>
</reference>
<sequence>MRIILASSSPRRRQLMELLGIEFEVEKPDVEEEFLESPEETVRELSLRKAEWVFKKRKEEEILVIGSDTVVVLDGNILGKPESLEEAKGMLKKLSGKWHVVYTGVAFVSSETKDVIVSSTKVRFRELPESVIDYYVEKYRPLDKAGAYGIQDFAAVFVEKIEGDFFTVVGFPLGMVWQYLYEKGWWKVASKREDDKGGARVAFG</sequence>
<comment type="function">
    <text evidence="1">Nucleoside triphosphate pyrophosphatase that hydrolyzes dTTP and UTP. May have a dual role in cell division arrest and in preventing the incorporation of modified nucleotides into cellular nucleic acids.</text>
</comment>
<comment type="catalytic activity">
    <reaction evidence="1">
        <text>dTTP + H2O = dTMP + diphosphate + H(+)</text>
        <dbReference type="Rhea" id="RHEA:28534"/>
        <dbReference type="ChEBI" id="CHEBI:15377"/>
        <dbReference type="ChEBI" id="CHEBI:15378"/>
        <dbReference type="ChEBI" id="CHEBI:33019"/>
        <dbReference type="ChEBI" id="CHEBI:37568"/>
        <dbReference type="ChEBI" id="CHEBI:63528"/>
        <dbReference type="EC" id="3.6.1.9"/>
    </reaction>
</comment>
<comment type="catalytic activity">
    <reaction evidence="1">
        <text>UTP + H2O = UMP + diphosphate + H(+)</text>
        <dbReference type="Rhea" id="RHEA:29395"/>
        <dbReference type="ChEBI" id="CHEBI:15377"/>
        <dbReference type="ChEBI" id="CHEBI:15378"/>
        <dbReference type="ChEBI" id="CHEBI:33019"/>
        <dbReference type="ChEBI" id="CHEBI:46398"/>
        <dbReference type="ChEBI" id="CHEBI:57865"/>
        <dbReference type="EC" id="3.6.1.9"/>
    </reaction>
</comment>
<comment type="cofactor">
    <cofactor evidence="1">
        <name>a divalent metal cation</name>
        <dbReference type="ChEBI" id="CHEBI:60240"/>
    </cofactor>
</comment>
<comment type="subcellular location">
    <subcellularLocation>
        <location evidence="1">Cytoplasm</location>
    </subcellularLocation>
</comment>
<comment type="similarity">
    <text evidence="1">Belongs to the Maf family. YhdE subfamily.</text>
</comment>